<evidence type="ECO:0000250" key="1"/>
<evidence type="ECO:0000250" key="2">
    <source>
        <dbReference type="UniProtKB" id="Q9Z1S3"/>
    </source>
</evidence>
<evidence type="ECO:0000255" key="3"/>
<evidence type="ECO:0000255" key="4">
    <source>
        <dbReference type="PROSITE-ProRule" id="PRU00135"/>
    </source>
</evidence>
<evidence type="ECO:0000255" key="5">
    <source>
        <dbReference type="PROSITE-ProRule" id="PRU00168"/>
    </source>
</evidence>
<evidence type="ECO:0000255" key="6">
    <source>
        <dbReference type="PROSITE-ProRule" id="PRU00226"/>
    </source>
</evidence>
<evidence type="ECO:0000255" key="7">
    <source>
        <dbReference type="PROSITE-ProRule" id="PRU00448"/>
    </source>
</evidence>
<evidence type="ECO:0000256" key="8">
    <source>
        <dbReference type="SAM" id="MobiDB-lite"/>
    </source>
</evidence>
<evidence type="ECO:0000269" key="9">
    <source>
    </source>
</evidence>
<evidence type="ECO:0000269" key="10">
    <source>
    </source>
</evidence>
<evidence type="ECO:0000269" key="11">
    <source>
    </source>
</evidence>
<evidence type="ECO:0000269" key="12">
    <source>
    </source>
</evidence>
<evidence type="ECO:0000269" key="13">
    <source>
    </source>
</evidence>
<evidence type="ECO:0000269" key="14">
    <source>
    </source>
</evidence>
<evidence type="ECO:0000269" key="15">
    <source>
    </source>
</evidence>
<evidence type="ECO:0000269" key="16">
    <source>
    </source>
</evidence>
<evidence type="ECO:0000269" key="17">
    <source>
    </source>
</evidence>
<evidence type="ECO:0000269" key="18">
    <source>
    </source>
</evidence>
<evidence type="ECO:0000269" key="19">
    <source>
    </source>
</evidence>
<evidence type="ECO:0000269" key="20">
    <source>
    </source>
</evidence>
<evidence type="ECO:0000269" key="21">
    <source>
    </source>
</evidence>
<evidence type="ECO:0000269" key="22">
    <source>
    </source>
</evidence>
<evidence type="ECO:0000269" key="23">
    <source>
    </source>
</evidence>
<evidence type="ECO:0000269" key="24">
    <source>
    </source>
</evidence>
<evidence type="ECO:0000269" key="25">
    <source>
    </source>
</evidence>
<evidence type="ECO:0000269" key="26">
    <source>
    </source>
</evidence>
<evidence type="ECO:0000303" key="27">
    <source>
    </source>
</evidence>
<evidence type="ECO:0000303" key="28">
    <source ref="5"/>
</evidence>
<evidence type="ECO:0000305" key="29"/>
<evidence type="ECO:0007829" key="30">
    <source>
        <dbReference type="PDB" id="4L9M"/>
    </source>
</evidence>
<evidence type="ECO:0007829" key="31">
    <source>
        <dbReference type="PDB" id="4L9U"/>
    </source>
</evidence>
<name>GRP1_HUMAN</name>
<sequence length="797" mass="90402">MGTLGKAREAPRKPSHGCRAASKARLEAKPANSPFPSHPSLAHITQFRMMVSLGHLAKGASLDDLIDSCIQSFDADGNLCRSNQLLQVMLTMHRIVISSAELLQKVITLYKDALAKNSPGLCLKICYFVRYWITEFWVMFKMDASLTDTMEEFQELVKAKGEELHCRLIDTTQINARDWSRKLTQRIKSNTSKKRKVSLLFDHLEPEELSEHLTYLEFKSFRRISFSDYQNYLVNSCVKENPTMERSIALCNGISQWVQLMVLSRPTPQLRAEVFIKFIQVAQKLHQLQNFNTLMAVIGGLCHSSISRLKETSSHVPHEINKVLGEMTELLSSSRNYDNYRRAYGECTDFKIPILGVHLKDLISLYEAMPDYLEDGKVNVHKLLALYNHISELVQLQEVAPPLEANKDLVHLLTLSLDLYYTEDEIYELSYAREPRNHRAPPLTPSKPPVVVDWASGVSPKPDPKTISKHVQRMVDSVFKNYDHDQDGYISQEEFEKIAASFPFSFCVMDKDREGLISRDEITAYFMRASSIYSKLGLGFPHNFQETTYLKPTFCDNCAGFLWGVIKQGYRCKDCGMNCHKQCKDLVVFECKKRAKNPVAPTENNTSVGPVSNLCSLGAKDLLHAPEEGPFTFPNGEAVEHGEESKDRTIMLMGVSSQKISLRLKRAVAHKATQTESQPWIGSEGPSGPFVLSSPRKTAQDTLYVLPSPTSPCPSPVLVRKRAFVKWENKDSLIKSKEELRHLRLPTYQELEQEINTLKADNDALKIQLKYAQKKIESLQLEKSNHVLAQMEQGDCS</sequence>
<organism>
    <name type="scientific">Homo sapiens</name>
    <name type="common">Human</name>
    <dbReference type="NCBI Taxonomy" id="9606"/>
    <lineage>
        <taxon>Eukaryota</taxon>
        <taxon>Metazoa</taxon>
        <taxon>Chordata</taxon>
        <taxon>Craniata</taxon>
        <taxon>Vertebrata</taxon>
        <taxon>Euteleostomi</taxon>
        <taxon>Mammalia</taxon>
        <taxon>Eutheria</taxon>
        <taxon>Euarchontoglires</taxon>
        <taxon>Primates</taxon>
        <taxon>Haplorrhini</taxon>
        <taxon>Catarrhini</taxon>
        <taxon>Hominidae</taxon>
        <taxon>Homo</taxon>
    </lineage>
</organism>
<reference key="1">
    <citation type="journal article" date="1998" name="Proc. Natl. Acad. Sci. U.S.A.">
        <title>A Rap guanine nucleotide exchange factor enriched highly in the basal ganglia.</title>
        <authorList>
            <person name="Kawasaki H."/>
            <person name="Springett G.M."/>
            <person name="Toki S."/>
            <person name="Canales J.J."/>
            <person name="Harlan P."/>
            <person name="Blumenstiel J.P."/>
            <person name="Chen E.J."/>
            <person name="Bany I.A."/>
            <person name="Mochizuki N."/>
            <person name="Ashbacher A."/>
            <person name="Matsuda M."/>
            <person name="Housman D.E."/>
            <person name="Graybiel A.M."/>
        </authorList>
    </citation>
    <scope>NUCLEOTIDE SEQUENCE [MRNA] (ISOFORM 1)</scope>
    <scope>TISSUE SPECIFICITY</scope>
    <scope>DEVELOPMENTAL STAGE</scope>
    <source>
        <tissue>Frontal cortex</tissue>
    </source>
</reference>
<reference key="2">
    <citation type="journal article" date="1999" name="Mamm. Genome">
        <title>RasGRP, a Ras activator: mouse and human cDNA sequences and chromosomal positions.</title>
        <authorList>
            <person name="Bottorff D.A."/>
            <person name="Ebinu J.O."/>
            <person name="Stone J.C."/>
        </authorList>
    </citation>
    <scope>NUCLEOTIDE SEQUENCE [MRNA] (ISOFORM 1)</scope>
    <source>
        <tissue>T-cell</tissue>
    </source>
</reference>
<reference key="3">
    <citation type="journal article" date="2007" name="J. Immunol.">
        <title>Defective expression of ras guanyl nucleotide-releasing protein 1 in a subset of patients with systemic lupus erythematosus.</title>
        <authorList>
            <person name="Yasuda S."/>
            <person name="Stevens R.L."/>
            <person name="Terada T."/>
            <person name="Takeda M."/>
            <person name="Hashimoto T."/>
            <person name="Fukae J."/>
            <person name="Horita T."/>
            <person name="Kataoka H."/>
            <person name="Atsumi T."/>
            <person name="Koike T."/>
        </authorList>
    </citation>
    <scope>NUCLEOTIDE SEQUENCE [MRNA] (ISOFORMS 2; 3; 4 AND 5)</scope>
    <scope>INVOLVEMENT IN SYSTEMIC LUPUS ERYTHEMATOSUS</scope>
    <scope>TISSUE SPECIFICITY</scope>
    <source>
        <tissue>Peripheral blood</tissue>
    </source>
</reference>
<reference key="4">
    <citation type="journal article" date="2004" name="Genome Res.">
        <title>The status, quality, and expansion of the NIH full-length cDNA project: the Mammalian Gene Collection (MGC).</title>
        <authorList>
            <consortium name="The MGC Project Team"/>
        </authorList>
    </citation>
    <scope>NUCLEOTIDE SEQUENCE [LARGE SCALE MRNA] (ISOFORM 1)</scope>
    <source>
        <tissue>Testis</tissue>
    </source>
</reference>
<reference key="5">
    <citation type="submission" date="2005-03" db="EMBL/GenBank/DDBJ databases">
        <authorList>
            <person name="Totoki Y."/>
            <person name="Toyoda A."/>
            <person name="Takeda T."/>
            <person name="Sakaki Y."/>
            <person name="Tanaka A."/>
            <person name="Yokoyama S."/>
            <person name="Ohara O."/>
            <person name="Nagase T."/>
            <person name="Kikuno R.F."/>
        </authorList>
    </citation>
    <scope>NUCLEOTIDE SEQUENCE [LARGE SCALE MRNA] OF 233-797 (ISOFORM 2)</scope>
    <source>
        <tissue>Brain</tissue>
    </source>
</reference>
<reference key="6">
    <citation type="journal article" date="2000" name="Blood">
        <title>RasGRP links T-cell receptor signaling to Ras.</title>
        <authorList>
            <person name="Ebinu J.O."/>
            <person name="Stang S.L."/>
            <person name="Teixeira C."/>
            <person name="Bottorff D.A."/>
            <person name="Hooton J."/>
            <person name="Blumberg P.M."/>
            <person name="Barry M."/>
            <person name="Bleakley R.C."/>
            <person name="Ostergaard H.L."/>
            <person name="Stone J.C."/>
        </authorList>
    </citation>
    <scope>FUNCTION IN T-CELL RECEPTOR SIGNALING</scope>
    <scope>TOPOLOGY</scope>
    <scope>TISSUE SPECIFICITY</scope>
</reference>
<reference key="7">
    <citation type="journal article" date="2001" name="J. Cell Biol.">
        <title>Diacylglycerol kinase zeta regulates Ras activation by a novel mechanism.</title>
        <authorList>
            <person name="Topham M.K."/>
            <person name="Prescott S.M."/>
        </authorList>
    </citation>
    <scope>IDENTIFICATION IN A COMPLEX WITH DGKZ AND HRAS</scope>
    <scope>ACTIVITY REGULATION</scope>
</reference>
<reference key="8">
    <citation type="journal article" date="2002" name="FASEB J.">
        <title>Expression of a catalytically inactive form of diacylglycerol kinase alpha induces sustained signaling through RasGRP.</title>
        <authorList>
            <person name="Jones D.R."/>
            <person name="Sanjuan M.A."/>
            <person name="Stone J.C."/>
            <person name="Merida I."/>
        </authorList>
    </citation>
    <scope>ACTIVITY REGULATION</scope>
</reference>
<reference key="9">
    <citation type="journal article" date="2003" name="EMBO J.">
        <title>Vav mediates Ras stimulation by direct activation of the GDP/GTP exchange factor Ras GRP1.</title>
        <authorList>
            <person name="Caloca M.J."/>
            <person name="Zugaza J.L."/>
            <person name="Matallanas D."/>
            <person name="Crespo P."/>
            <person name="Bustelo X.R."/>
        </authorList>
    </citation>
    <scope>FUNCTION IN B-CELLS</scope>
    <scope>SUBCELLULAR LOCATION</scope>
    <scope>INTERACTION WITH F-ACTIN</scope>
    <scope>ACTIVITY REGULATION</scope>
</reference>
<reference key="10">
    <citation type="journal article" date="2003" name="J. Biol. Chem.">
        <title>Exchange factors of the RasGRP family mediate Ras activation in the Golgi.</title>
        <authorList>
            <person name="Caloca M.J."/>
            <person name="Zugaza J.L."/>
            <person name="Bustelo X.R."/>
        </authorList>
    </citation>
    <scope>FUNCTION</scope>
    <scope>SUBCELLULAR LOCATION</scope>
    <scope>MUTAGENESIS OF TYR-549</scope>
</reference>
<reference key="11">
    <citation type="journal article" date="2003" name="Nature">
        <title>Phospholipase Cgamma activates Ras on the Golgi apparatus by means of RasGRP1.</title>
        <authorList>
            <person name="Bivona T.G."/>
            <person name="Perez De Castro I."/>
            <person name="Ahearn I.M."/>
            <person name="Grana T.M."/>
            <person name="Chiu V.K."/>
            <person name="Lockyer P.J."/>
            <person name="Cullen P.J."/>
            <person name="Pellicer A."/>
            <person name="Cox A.D."/>
            <person name="Philips M.R."/>
        </authorList>
    </citation>
    <scope>FUNCTION</scope>
    <scope>MUTAGENESIS OF ARG-271</scope>
</reference>
<reference key="12">
    <citation type="journal article" date="2004" name="Mol. Cell. Biol.">
        <title>Ras activation in Jurkat T cells following low-grade stimulation of the T-cell receptor is specific to N-Ras and occurs only on the Golgi apparatus.</title>
        <authorList>
            <person name="Perez de Castro I."/>
            <person name="Bivona T.G."/>
            <person name="Philips M.R."/>
            <person name="Pellicer A."/>
        </authorList>
    </citation>
    <scope>FUNCTION</scope>
    <scope>SUBCELLULAR LOCATION</scope>
</reference>
<reference key="13">
    <citation type="journal article" date="2004" name="Oncogene">
        <title>Inverted signaling hierarchy between RAS and RAC in T-lymphocytes.</title>
        <authorList>
            <person name="Zugaza J.L."/>
            <person name="Caloca M.J."/>
            <person name="Bustelo X.R."/>
        </authorList>
    </citation>
    <scope>FUNCTION</scope>
    <scope>SUBCELLULAR LOCATION</scope>
</reference>
<reference key="14">
    <citation type="journal article" date="2005" name="Blood">
        <title>Phosphorylation of RasGRP3 on threonine 133 provides a mechanistic link between PKC and Ras signaling systems in B cells.</title>
        <authorList>
            <person name="Zheng Y."/>
            <person name="Liu H."/>
            <person name="Coughlin J.J."/>
            <person name="Zheng J."/>
            <person name="Li L."/>
            <person name="Stone J.C."/>
        </authorList>
    </citation>
    <scope>PHOSPHORYLATION AT THR-184 BY PKC</scope>
</reference>
<reference key="15">
    <citation type="journal article" date="2005" name="Mol. Cell. Biol.">
        <title>A diacylglycerol-protein kinase C-RasGRP1 pathway directs Ras activation upon antigen receptor stimulation of T cells.</title>
        <authorList>
            <person name="Roose J.P."/>
            <person name="Mollenauer M."/>
            <person name="Gupta V.A."/>
            <person name="Stone J.C."/>
            <person name="Weiss A."/>
        </authorList>
    </citation>
    <scope>FUNCTION</scope>
    <scope>PHOSPHORYLATION AT THR-184</scope>
</reference>
<reference key="16">
    <citation type="journal article" date="2008" name="Mol. Immunol.">
        <title>SKAP55 modulates T cell antigen receptor-induced activation of the Ras-Erk-AP1 pathway by binding RasGRP1.</title>
        <authorList>
            <person name="Kosco K.A."/>
            <person name="Cerignoli F."/>
            <person name="Williams S."/>
            <person name="Abraham R.T."/>
            <person name="Mustelin T."/>
        </authorList>
    </citation>
    <scope>INTERACTION WITH SKAP1</scope>
</reference>
<reference key="17">
    <citation type="journal article" date="2009" name="J. Immunol.">
        <title>RasGRP1 is required for human NK cell function.</title>
        <authorList>
            <person name="Lee S.H."/>
            <person name="Yun S."/>
            <person name="Lee J."/>
            <person name="Kim M.J."/>
            <person name="Piao Z.H."/>
            <person name="Jeong M."/>
            <person name="Chung J.W."/>
            <person name="Kim T.D."/>
            <person name="Yoon S.R."/>
            <person name="Greenberg P.D."/>
            <person name="Choi I."/>
        </authorList>
    </citation>
    <scope>FUNCTION</scope>
    <scope>TISSUE SPECIFICITY</scope>
</reference>
<reference key="18">
    <citation type="journal article" date="2016" name="Nat. Immunol.">
        <title>RASGRP1 deficiency causes immunodeficiency with impaired cytoskeletal dynamics.</title>
        <authorList>
            <person name="Salzer E."/>
            <person name="Cagdas D."/>
            <person name="Hons M."/>
            <person name="Mace E.M."/>
            <person name="Garncarz W."/>
            <person name="Petronczki O.Y."/>
            <person name="Platzer R."/>
            <person name="Pfajfer L."/>
            <person name="Bilic I."/>
            <person name="Ban S.A."/>
            <person name="Willmann K.L."/>
            <person name="Mukherjee M."/>
            <person name="Supper V."/>
            <person name="Hsu H.T."/>
            <person name="Banerjee P.P."/>
            <person name="Sinha P."/>
            <person name="McClanahan F."/>
            <person name="Zlabinger G.J."/>
            <person name="Pickl W.F."/>
            <person name="Gribben J.G."/>
            <person name="Stockinger H."/>
            <person name="Bennett K.L."/>
            <person name="Huppa J.B."/>
            <person name="Dupre L."/>
            <person name="Sanal O."/>
            <person name="Jaeger U."/>
            <person name="Sixt M."/>
            <person name="Tezcan I."/>
            <person name="Orange J.S."/>
            <person name="Boztug K."/>
        </authorList>
    </citation>
    <scope>INVOLVEMENT IN IMD64</scope>
    <scope>VARIANT IMD64 246-ARG--SER-797 DEL</scope>
    <scope>CHARACTERIZATION OF VARIANT IMD64 246-ARG--SER-797 DEL</scope>
    <scope>FUNCTION</scope>
</reference>
<reference key="19">
    <citation type="journal article" date="2013" name="Elife">
        <title>Structural analysis of autoinhibition in the Ras-specific exchange factor RasGRP1.</title>
        <authorList>
            <person name="Iwig J.S."/>
            <person name="Vercoulen Y."/>
            <person name="Das R."/>
            <person name="Barros T."/>
            <person name="Limnander A."/>
            <person name="Che Y."/>
            <person name="Pelton J.G."/>
            <person name="Wemmer D.E."/>
            <person name="Roose J.P."/>
            <person name="Kuriyan J."/>
        </authorList>
    </citation>
    <scope>X-RAY CRYSTALLOGRAPHY (1.6 ANGSTROMS) OF 50-607 AND 739-793</scope>
    <scope>FUNCTION</scope>
    <scope>ACTIVITY REGULATION</scope>
    <scope>SUBUNIT</scope>
    <scope>DOMAIN</scope>
    <scope>MUTAGENESIS OF ARG-271; 483-ASP--ASP-487; GLU-494; PHE-506 AND VAL-508</scope>
</reference>
<reference key="20">
    <citation type="journal article" date="2017" name="Clin. Immunol.">
        <title>Combined immunodeficiency with EBV positive B cell lymphoma and epidermodysplasia verruciformis due to a novel homozygous mutation in RASGRP1.</title>
        <authorList>
            <person name="Platt C.D."/>
            <person name="Fried A.J."/>
            <person name="Hoyos-Bachiloglu R."/>
            <person name="Usmani G.N."/>
            <person name="Schmidt B."/>
            <person name="Whangbo J."/>
            <person name="Chiarle R."/>
            <person name="Chou J."/>
            <person name="Geha R.S."/>
        </authorList>
    </citation>
    <scope>VARIANT IMD64 257-TRP--SER-797 DEL</scope>
</reference>
<reference key="21">
    <citation type="journal article" date="2018" name="J. Allergy Clin. Immunol.">
        <title>RASGRP1 mutation in autoimmune lymphoproliferative syndrome-like disease.</title>
        <authorList>
            <person name="Mao H."/>
            <person name="Yang W."/>
            <person name="Latour S."/>
            <person name="Yang J."/>
            <person name="Winter S."/>
            <person name="Zheng J."/>
            <person name="Ni K."/>
            <person name="Lv M."/>
            <person name="Liu C."/>
            <person name="Huang H."/>
            <person name="Chan K.W."/>
            <person name="Pui-Wah Lee P."/>
            <person name="Tu W."/>
            <person name="Fischer A."/>
            <person name="Lau Y.L."/>
        </authorList>
    </citation>
    <scope>VARIANTS IMD64 ILE-214 AND 322-LYS--SER-797 DEL</scope>
    <scope>CHARACTERIZATION OF VARIANTS IMD64 ILE-214 AND 322-LYS--SER-797 DEL</scope>
    <scope>FUNCTION</scope>
</reference>
<accession>O95267</accession>
<accession>Q56CZ0</accession>
<accession>Q58G75</accession>
<accession>Q59HB1</accession>
<accession>Q5I3A8</accession>
<accession>Q6GV31</accession>
<accession>Q6NX39</accession>
<accession>Q7LDG6</accession>
<accession>Q9UI94</accession>
<accession>Q9UNN9</accession>
<comment type="function">
    <text evidence="2 9 12 13 14 15 16 18 21 22 23 25">Functions as a calcium- and diacylglycerol (DAG)-regulated nucleotide exchange factor specifically activating Ras through the exchange of bound GDP for GTP (PubMed:15899849, PubMed:23908768, PubMed:27776107, PubMed:29155103). Activates the Erk/MAP kinase cascade (PubMed:15899849). Regulates T-cell/B-cell development, homeostasis and differentiation by coupling T-lymphocyte/B-lymphocyte antigen receptors to Ras (PubMed:10807788, PubMed:12839994, PubMed:27776107, PubMed:29155103). Regulates NK cell cytotoxicity and ITAM-dependent cytokine production by activation of Ras-mediated ERK and JNK pathways (PubMed:19933860). Functions in mast cell degranulation and cytokine secretion, regulating FcERI-evoked allergic responses. May also function in differentiation of other cell types (PubMed:12845332).</text>
</comment>
<comment type="activity regulation">
    <text evidence="10 11 13 22">Autoinhibited. Activated by diacylglycerol and calcium binding, which induces a conformational change releasing the autoinhibitory state (PubMed:23908768). Regulated by DGKA (PubMed:11919165). Regulated by DGKZ (PubMed:11257115). Regulated by PLC gamma and F-actin polymerization (PubMed:12839994).</text>
</comment>
<comment type="subunit">
    <text evidence="10 13 19 22">Homodimer (PubMed:23908768). Forms a signaling complex with DGKZ and HRAS (PubMed:11257115). Interacts with F-actin (PubMed:12839994). Interacts with SKAP1 (PubMed:17658605).</text>
</comment>
<comment type="subcellular location">
    <subcellularLocation>
        <location>Cytoplasm</location>
        <location>Cytosol</location>
    </subcellularLocation>
    <subcellularLocation>
        <location>Cell membrane</location>
        <topology>Peripheral membrane protein</topology>
    </subcellularLocation>
    <subcellularLocation>
        <location>Golgi apparatus membrane</location>
        <topology>Peripheral membrane protein</topology>
    </subcellularLocation>
    <subcellularLocation>
        <location>Endoplasmic reticulum membrane</location>
        <topology>Peripheral membrane protein</topology>
    </subcellularLocation>
    <text evidence="1">Found both in the cytosol and associated with membranes. Relocalization to the cell membrane upon activation is F-actin-dependent. Translocates to the Golgi in response to phorbol ester or nerve growth factor. Localizes to somata and dendrites but not to axons of hippocampal pyramidal cells (By similarity).</text>
</comment>
<comment type="alternative products">
    <event type="alternative splicing"/>
    <isoform>
        <id>O95267-1</id>
        <name>1</name>
        <sequence type="displayed"/>
    </isoform>
    <isoform>
        <id>O95267-2</id>
        <name>2</name>
        <name>A</name>
        <sequence type="described" ref="VSP_030836"/>
    </isoform>
    <isoform>
        <id>O95267-3</id>
        <name>3</name>
        <name>B</name>
        <sequence type="described" ref="VSP_030836 VSP_030841 VSP_030842"/>
    </isoform>
    <isoform>
        <id>O95267-4</id>
        <name>4</name>
        <name>C</name>
        <sequence type="described" ref="VSP_030836 VSP_030837 VSP_030838"/>
    </isoform>
    <isoform>
        <id>O95267-5</id>
        <name>5</name>
        <name>D</name>
        <sequence type="described" ref="VSP_030836 VSP_030839 VSP_030840"/>
    </isoform>
    <text>Additional isoforms seem to exist. Several splicing events may be used independently in a modular way.</text>
</comment>
<comment type="tissue specificity">
    <text evidence="9 20 21 26">Expressed in brain with higher expression in cerebellum, cerebral cortex and amygdala. Expressed in the hematopoietic system. Expressed in T-cells (at protein level). Expressed in NK cells (at protein level) (PubMed:19933860).</text>
</comment>
<comment type="developmental stage">
    <text evidence="26">Expressed in fetal brain and kidney.</text>
</comment>
<comment type="domain">
    <text>The phorbol-ester/DAG-type zinc finger is the principal mediator of the targeting to membranes and is required for functional activation through DAG-binding.</text>
</comment>
<comment type="domain">
    <text evidence="22">Two EF-hand domains are present. However, only EF-hand 1 (and not EF-hand 2) binds calcium.</text>
</comment>
<comment type="disease" evidence="20">
    <disease id="DI-02648">
        <name>Systemic lupus erythematosus</name>
        <acronym>SLE</acronym>
        <description>A chronic, relapsing, inflammatory, and often febrile multisystemic disorder of connective tissue, characterized principally by involvement of the skin, joints, kidneys and serosal membranes. It is of unknown etiology, but is thought to represent a failure of the regulatory mechanisms of the autoimmune system. The disease is marked by a wide range of system dysfunctions, an elevated erythrocyte sedimentation rate, and the formation of LE cells in the blood or bone marrow.</description>
        <dbReference type="MIM" id="152700"/>
    </disease>
    <text>Disease susceptibility is associated with variants affecting the gene represented in this entry. Aberrantly spliced isoforms and/or diminished levels of RASGRP1 are found in a cohort of SLE patients raising the possibility that dysregulation of this signaling protein contributes to the development of autoimmunity in a subset of SLE patients.</text>
</comment>
<comment type="disease" evidence="23 24 25">
    <disease id="DI-05632">
        <name>Immunodeficiency 64 with lymphoproliferation</name>
        <acronym>IMD64</acronym>
        <description>An autosomal recessive primary immunodeficiency characterized by recurrent bacterial, viral and fungal infections, variably decreased numbers of T cells, deficiencies of B and NK cells, and increased susceptibility to Epstein-Barr virus (EBV) infection. Patients may develop lymphoproliferation or EBV-associated lymphoma. Some patients may develop features of autoimmunity.</description>
        <dbReference type="MIM" id="618534"/>
    </disease>
    <text>The disease is caused by variants affecting the gene represented in this entry.</text>
</comment>
<comment type="similarity">
    <text evidence="29">Belongs to the RASGRP family.</text>
</comment>
<comment type="sequence caution" evidence="29">
    <conflict type="miscellaneous discrepancy">
        <sequence resource="EMBL-CDS" id="AAH67298"/>
    </conflict>
    <text>Contaminating sequence. Potential poly-A sequence.</text>
</comment>
<keyword id="KW-0002">3D-structure</keyword>
<keyword id="KW-0025">Alternative splicing</keyword>
<keyword id="KW-0106">Calcium</keyword>
<keyword id="KW-1003">Cell membrane</keyword>
<keyword id="KW-0175">Coiled coil</keyword>
<keyword id="KW-0963">Cytoplasm</keyword>
<keyword id="KW-0221">Differentiation</keyword>
<keyword id="KW-0225">Disease variant</keyword>
<keyword id="KW-0256">Endoplasmic reticulum</keyword>
<keyword id="KW-0333">Golgi apparatus</keyword>
<keyword id="KW-0344">Guanine-nucleotide releasing factor</keyword>
<keyword id="KW-0472">Membrane</keyword>
<keyword id="KW-0479">Metal-binding</keyword>
<keyword id="KW-0597">Phosphoprotein</keyword>
<keyword id="KW-1267">Proteomics identification</keyword>
<keyword id="KW-1185">Reference proteome</keyword>
<keyword id="KW-0677">Repeat</keyword>
<keyword id="KW-0772">Systemic lupus erythematosus</keyword>
<keyword id="KW-0862">Zinc</keyword>
<keyword id="KW-0863">Zinc-finger</keyword>
<protein>
    <recommendedName>
        <fullName>RAS guanyl-releasing protein 1</fullName>
    </recommendedName>
    <alternativeName>
        <fullName>Calcium and DAG-regulated guanine nucleotide exchange factor II</fullName>
        <shortName>CalDAG-GEFII</shortName>
    </alternativeName>
    <alternativeName>
        <fullName>Ras guanyl-releasing protein</fullName>
    </alternativeName>
</protein>
<proteinExistence type="evidence at protein level"/>
<gene>
    <name type="primary">RASGRP1</name>
    <name type="synonym">RASGRP</name>
</gene>
<feature type="chain" id="PRO_0000316978" description="RAS guanyl-releasing protein 1">
    <location>
        <begin position="1"/>
        <end position="797"/>
    </location>
</feature>
<feature type="domain" description="N-terminal Ras-GEF" evidence="4">
    <location>
        <begin position="53"/>
        <end position="176"/>
    </location>
</feature>
<feature type="domain" description="Ras-GEF" evidence="5">
    <location>
        <begin position="205"/>
        <end position="436"/>
    </location>
</feature>
<feature type="domain" description="EF-hand 1" evidence="7">
    <location>
        <begin position="470"/>
        <end position="505"/>
    </location>
</feature>
<feature type="domain" description="EF-hand 2" evidence="7">
    <location>
        <begin position="506"/>
        <end position="532"/>
    </location>
</feature>
<feature type="zinc finger region" description="Phorbol-ester/DAG-type" evidence="6">
    <location>
        <begin position="541"/>
        <end position="591"/>
    </location>
</feature>
<feature type="region of interest" description="Disordered" evidence="8">
    <location>
        <begin position="1"/>
        <end position="23"/>
    </location>
</feature>
<feature type="region of interest" description="Ras exchanger motif region; required for transforming activity" evidence="1">
    <location>
        <begin position="57"/>
        <end position="110"/>
    </location>
</feature>
<feature type="region of interest" description="Disordered" evidence="8">
    <location>
        <begin position="673"/>
        <end position="694"/>
    </location>
</feature>
<feature type="region of interest" description="Suppress the PT region-mediated translocation to plasma membrane" evidence="1">
    <location>
        <begin position="686"/>
        <end position="694"/>
    </location>
</feature>
<feature type="region of interest" description="PT region; mediates the BCR-dependent translocation to plasma membrane" evidence="1">
    <location>
        <begin position="718"/>
        <end position="797"/>
    </location>
</feature>
<feature type="coiled-coil region" evidence="3">
    <location>
        <begin position="746"/>
        <end position="786"/>
    </location>
</feature>
<feature type="compositionally biased region" description="Basic and acidic residues" evidence="8">
    <location>
        <begin position="1"/>
        <end position="12"/>
    </location>
</feature>
<feature type="binding site" evidence="7">
    <location>
        <position position="483"/>
    </location>
    <ligand>
        <name>Ca(2+)</name>
        <dbReference type="ChEBI" id="CHEBI:29108"/>
    </ligand>
</feature>
<feature type="binding site" evidence="7">
    <location>
        <position position="485"/>
    </location>
    <ligand>
        <name>Ca(2+)</name>
        <dbReference type="ChEBI" id="CHEBI:29108"/>
    </ligand>
</feature>
<feature type="binding site" evidence="7">
    <location>
        <position position="487"/>
    </location>
    <ligand>
        <name>Ca(2+)</name>
        <dbReference type="ChEBI" id="CHEBI:29108"/>
    </ligand>
</feature>
<feature type="binding site" evidence="7">
    <location>
        <position position="489"/>
    </location>
    <ligand>
        <name>Ca(2+)</name>
        <dbReference type="ChEBI" id="CHEBI:29108"/>
    </ligand>
</feature>
<feature type="binding site" evidence="7">
    <location>
        <position position="494"/>
    </location>
    <ligand>
        <name>Ca(2+)</name>
        <dbReference type="ChEBI" id="CHEBI:29108"/>
    </ligand>
</feature>
<feature type="modified residue" description="Phosphothreonine; by PKC" evidence="17 18">
    <location>
        <position position="184"/>
    </location>
</feature>
<feature type="splice variant" id="VSP_030836" description="In isoform 2, isoform 3, isoform 4 and isoform 5." evidence="27 28">
    <location>
        <begin position="442"/>
        <end position="476"/>
    </location>
</feature>
<feature type="splice variant" id="VSP_030837" description="In isoform 4." evidence="27">
    <original>REGL</original>
    <variation>SSGE</variation>
    <location>
        <begin position="513"/>
        <end position="516"/>
    </location>
</feature>
<feature type="splice variant" id="VSP_030838" description="In isoform 4." evidence="27">
    <location>
        <begin position="517"/>
        <end position="797"/>
    </location>
</feature>
<feature type="splice variant" id="VSP_030839" description="In isoform 5." evidence="27">
    <original>DCGMNCHK</original>
    <variation>GNKYSESR</variation>
    <location>
        <begin position="574"/>
        <end position="581"/>
    </location>
</feature>
<feature type="splice variant" id="VSP_030840" description="In isoform 5." evidence="27">
    <location>
        <begin position="582"/>
        <end position="797"/>
    </location>
</feature>
<feature type="splice variant" id="VSP_030841" description="In isoform 3." evidence="27">
    <original>APEEGPFT</original>
    <variation>GNKYSESR</variation>
    <location>
        <begin position="625"/>
        <end position="632"/>
    </location>
</feature>
<feature type="splice variant" id="VSP_030842" description="In isoform 3." evidence="27">
    <location>
        <begin position="633"/>
        <end position="797"/>
    </location>
</feature>
<feature type="sequence variant" id="VAR_083338" description="In IMD64; no effect on protein expression; decreased T cell activation; dbSNP:rs1595848141." evidence="25">
    <original>T</original>
    <variation>I</variation>
    <location>
        <position position="214"/>
    </location>
</feature>
<feature type="sequence variant" id="VAR_083339" description="In IMD64; loss of protein expression." evidence="23">
    <location>
        <begin position="246"/>
        <end position="797"/>
    </location>
</feature>
<feature type="sequence variant" id="VAR_083340" description="In IMD64." evidence="24">
    <location>
        <begin position="257"/>
        <end position="797"/>
    </location>
</feature>
<feature type="sequence variant" id="VAR_083341" description="In IMD64; no effect on protein expression; decreased T cell activation." evidence="25">
    <location>
        <begin position="322"/>
        <end position="797"/>
    </location>
</feature>
<feature type="mutagenesis site" description="Loss of function; prevents Ras activation." evidence="14 22">
    <original>R</original>
    <variation>E</variation>
    <location>
        <position position="271"/>
    </location>
</feature>
<feature type="mutagenesis site" description="Decrease of Ras activation indicated by decrease of ERK phosphorylation." evidence="22">
    <original>DHDQD</original>
    <variation>AHAQA</variation>
    <location>
        <begin position="483"/>
        <end position="487"/>
    </location>
</feature>
<feature type="mutagenesis site" description="Decrease of Ras activation indicated by decrease of ERK phosphorylation." evidence="22">
    <original>E</original>
    <variation>A</variation>
    <location>
        <position position="494"/>
    </location>
</feature>
<feature type="mutagenesis site" description="Increase of Ras activation indicated by increase of ERK phosphorylation." evidence="22">
    <original>F</original>
    <variation>D</variation>
    <location>
        <position position="506"/>
    </location>
</feature>
<feature type="mutagenesis site" description="Increase of Ras activation indicated by increase of ERK phosphorylation." evidence="22">
    <original>V</original>
    <variation>D</variation>
    <location>
        <position position="508"/>
    </location>
</feature>
<feature type="mutagenesis site" description="Loss of localization to the endoplasmic reticulum and the Golgi apparatus." evidence="12">
    <original>Y</original>
    <variation>F</variation>
    <location>
        <position position="549"/>
    </location>
</feature>
<feature type="sequence conflict" description="In Ref. 1; AAC79699/AAF21898." evidence="29" ref="1">
    <original>E</original>
    <variation>G</variation>
    <location>
        <position position="374"/>
    </location>
</feature>
<feature type="helix" evidence="30">
    <location>
        <begin position="62"/>
        <end position="71"/>
    </location>
</feature>
<feature type="helix" evidence="30">
    <location>
        <begin position="84"/>
        <end position="92"/>
    </location>
</feature>
<feature type="helix" evidence="30">
    <location>
        <begin position="93"/>
        <end position="95"/>
    </location>
</feature>
<feature type="helix" evidence="30">
    <location>
        <begin position="99"/>
        <end position="115"/>
    </location>
</feature>
<feature type="helix" evidence="30">
    <location>
        <begin position="119"/>
        <end position="135"/>
    </location>
</feature>
<feature type="helix" evidence="30">
    <location>
        <begin position="138"/>
        <end position="142"/>
    </location>
</feature>
<feature type="helix" evidence="30">
    <location>
        <begin position="144"/>
        <end position="160"/>
    </location>
</feature>
<feature type="helix" evidence="30">
    <location>
        <begin position="164"/>
        <end position="168"/>
    </location>
</feature>
<feature type="helix" evidence="30">
    <location>
        <begin position="172"/>
        <end position="179"/>
    </location>
</feature>
<feature type="strand" evidence="30">
    <location>
        <begin position="201"/>
        <end position="203"/>
    </location>
</feature>
<feature type="helix" evidence="30">
    <location>
        <begin position="206"/>
        <end position="222"/>
    </location>
</feature>
<feature type="helix" evidence="30">
    <location>
        <begin position="226"/>
        <end position="234"/>
    </location>
</feature>
<feature type="helix" evidence="30">
    <location>
        <begin position="242"/>
        <end position="264"/>
    </location>
</feature>
<feature type="turn" evidence="30">
    <location>
        <begin position="267"/>
        <end position="269"/>
    </location>
</feature>
<feature type="helix" evidence="30">
    <location>
        <begin position="270"/>
        <end position="287"/>
    </location>
</feature>
<feature type="helix" evidence="30">
    <location>
        <begin position="291"/>
        <end position="301"/>
    </location>
</feature>
<feature type="helix" evidence="30">
    <location>
        <begin position="304"/>
        <end position="307"/>
    </location>
</feature>
<feature type="helix" evidence="30">
    <location>
        <begin position="310"/>
        <end position="315"/>
    </location>
</feature>
<feature type="helix" evidence="30">
    <location>
        <begin position="318"/>
        <end position="331"/>
    </location>
</feature>
<feature type="turn" evidence="30">
    <location>
        <begin position="335"/>
        <end position="337"/>
    </location>
</feature>
<feature type="helix" evidence="30">
    <location>
        <begin position="338"/>
        <end position="345"/>
    </location>
</feature>
<feature type="helix" evidence="30">
    <location>
        <begin position="355"/>
        <end position="368"/>
    </location>
</feature>
<feature type="strand" evidence="30">
    <location>
        <begin position="376"/>
        <end position="378"/>
    </location>
</feature>
<feature type="helix" evidence="30">
    <location>
        <begin position="380"/>
        <end position="395"/>
    </location>
</feature>
<feature type="helix" evidence="30">
    <location>
        <begin position="396"/>
        <end position="398"/>
    </location>
</feature>
<feature type="helix" evidence="30">
    <location>
        <begin position="407"/>
        <end position="416"/>
    </location>
</feature>
<feature type="helix" evidence="30">
    <location>
        <begin position="423"/>
        <end position="433"/>
    </location>
</feature>
<feature type="helix" evidence="30">
    <location>
        <begin position="464"/>
        <end position="482"/>
    </location>
</feature>
<feature type="helix" evidence="30">
    <location>
        <begin position="492"/>
        <end position="500"/>
    </location>
</feature>
<feature type="helix" evidence="30">
    <location>
        <begin position="519"/>
        <end position="533"/>
    </location>
</feature>
<feature type="strand" evidence="30">
    <location>
        <begin position="544"/>
        <end position="547"/>
    </location>
</feature>
<feature type="turn" evidence="30">
    <location>
        <begin position="556"/>
        <end position="558"/>
    </location>
</feature>
<feature type="strand" evidence="30">
    <location>
        <begin position="564"/>
        <end position="566"/>
    </location>
</feature>
<feature type="strand" evidence="30">
    <location>
        <begin position="569"/>
        <end position="572"/>
    </location>
</feature>
<feature type="turn" evidence="30">
    <location>
        <begin position="573"/>
        <end position="575"/>
    </location>
</feature>
<feature type="turn" evidence="30">
    <location>
        <begin position="581"/>
        <end position="583"/>
    </location>
</feature>
<feature type="strand" evidence="30">
    <location>
        <begin position="584"/>
        <end position="586"/>
    </location>
</feature>
<feature type="helix" evidence="31">
    <location>
        <begin position="748"/>
        <end position="782"/>
    </location>
</feature>
<feature type="turn" evidence="31">
    <location>
        <begin position="783"/>
        <end position="785"/>
    </location>
</feature>
<feature type="helix" evidence="31">
    <location>
        <begin position="788"/>
        <end position="791"/>
    </location>
</feature>
<dbReference type="EMBL" id="AF081195">
    <property type="protein sequence ID" value="AAC79699.1"/>
    <property type="molecule type" value="mRNA"/>
</dbReference>
<dbReference type="EMBL" id="AF081197">
    <property type="protein sequence ID" value="AAF21898.1"/>
    <property type="molecule type" value="mRNA"/>
</dbReference>
<dbReference type="EMBL" id="AF106071">
    <property type="protein sequence ID" value="AAC97349.1"/>
    <property type="molecule type" value="mRNA"/>
</dbReference>
<dbReference type="EMBL" id="AY634315">
    <property type="protein sequence ID" value="AAT47482.2"/>
    <property type="molecule type" value="mRNA"/>
</dbReference>
<dbReference type="EMBL" id="AY858556">
    <property type="protein sequence ID" value="AAW32406.2"/>
    <property type="molecule type" value="mRNA"/>
</dbReference>
<dbReference type="EMBL" id="AY954625">
    <property type="protein sequence ID" value="AAX54699.4"/>
    <property type="molecule type" value="mRNA"/>
</dbReference>
<dbReference type="EMBL" id="AY966005">
    <property type="protein sequence ID" value="AAX76907.1"/>
    <property type="molecule type" value="mRNA"/>
</dbReference>
<dbReference type="EMBL" id="BC067298">
    <property type="protein sequence ID" value="AAH67298.1"/>
    <property type="status" value="ALT_SEQ"/>
    <property type="molecule type" value="mRNA"/>
</dbReference>
<dbReference type="EMBL" id="BC109296">
    <property type="protein sequence ID" value="AAI09297.1"/>
    <property type="molecule type" value="mRNA"/>
</dbReference>
<dbReference type="EMBL" id="BC109297">
    <property type="protein sequence ID" value="AAI09298.1"/>
    <property type="molecule type" value="mRNA"/>
</dbReference>
<dbReference type="EMBL" id="AB208848">
    <property type="protein sequence ID" value="BAD92085.1"/>
    <property type="molecule type" value="mRNA"/>
</dbReference>
<dbReference type="CCDS" id="CCDS45221.1">
    <molecule id="O95267-2"/>
</dbReference>
<dbReference type="CCDS" id="CCDS45222.1">
    <molecule id="O95267-1"/>
</dbReference>
<dbReference type="CCDS" id="CCDS76733.1">
    <molecule id="O95267-3"/>
</dbReference>
<dbReference type="RefSeq" id="NP_001122074.1">
    <molecule id="O95267-2"/>
    <property type="nucleotide sequence ID" value="NM_001128602.2"/>
</dbReference>
<dbReference type="RefSeq" id="NP_001293015.1">
    <molecule id="O95267-3"/>
    <property type="nucleotide sequence ID" value="NM_001306086.2"/>
</dbReference>
<dbReference type="RefSeq" id="NP_005730.2">
    <molecule id="O95267-1"/>
    <property type="nucleotide sequence ID" value="NM_005739.4"/>
</dbReference>
<dbReference type="PDB" id="4L9M">
    <property type="method" value="X-ray"/>
    <property type="resolution" value="3.00 A"/>
    <property type="chains" value="A=50-607"/>
</dbReference>
<dbReference type="PDB" id="4L9U">
    <property type="method" value="X-ray"/>
    <property type="resolution" value="1.60 A"/>
    <property type="chains" value="A/B=739-793"/>
</dbReference>
<dbReference type="PDBsum" id="4L9M"/>
<dbReference type="PDBsum" id="4L9U"/>
<dbReference type="SMR" id="O95267"/>
<dbReference type="BioGRID" id="115429">
    <property type="interactions" value="9"/>
</dbReference>
<dbReference type="CORUM" id="O95267"/>
<dbReference type="FunCoup" id="O95267">
    <property type="interactions" value="1510"/>
</dbReference>
<dbReference type="IntAct" id="O95267">
    <property type="interactions" value="5"/>
</dbReference>
<dbReference type="MINT" id="O95267"/>
<dbReference type="STRING" id="9606.ENSP00000310244"/>
<dbReference type="BindingDB" id="O95267"/>
<dbReference type="ChEMBL" id="CHEMBL5953"/>
<dbReference type="GuidetoPHARMACOLOGY" id="3016"/>
<dbReference type="GlyGen" id="O95267">
    <property type="glycosylation" value="1 site"/>
</dbReference>
<dbReference type="iPTMnet" id="O95267"/>
<dbReference type="PhosphoSitePlus" id="O95267"/>
<dbReference type="BioMuta" id="RASGRP1"/>
<dbReference type="jPOST" id="O95267"/>
<dbReference type="MassIVE" id="O95267"/>
<dbReference type="PaxDb" id="9606-ENSP00000310244"/>
<dbReference type="PeptideAtlas" id="O95267"/>
<dbReference type="ProteomicsDB" id="50767">
    <molecule id="O95267-1"/>
</dbReference>
<dbReference type="ProteomicsDB" id="50768">
    <molecule id="O95267-2"/>
</dbReference>
<dbReference type="ProteomicsDB" id="50769">
    <molecule id="O95267-3"/>
</dbReference>
<dbReference type="ProteomicsDB" id="50770">
    <molecule id="O95267-4"/>
</dbReference>
<dbReference type="ProteomicsDB" id="50771">
    <molecule id="O95267-5"/>
</dbReference>
<dbReference type="Antibodypedia" id="53148">
    <property type="antibodies" value="143 antibodies from 23 providers"/>
</dbReference>
<dbReference type="DNASU" id="10125"/>
<dbReference type="Ensembl" id="ENST00000310803.10">
    <molecule id="O95267-1"/>
    <property type="protein sequence ID" value="ENSP00000310244.5"/>
    <property type="gene ID" value="ENSG00000172575.14"/>
</dbReference>
<dbReference type="Ensembl" id="ENST00000414708.6">
    <molecule id="O95267-4"/>
    <property type="protein sequence ID" value="ENSP00000413105.2"/>
    <property type="gene ID" value="ENSG00000172575.14"/>
</dbReference>
<dbReference type="Ensembl" id="ENST00000450598.6">
    <molecule id="O95267-2"/>
    <property type="protein sequence ID" value="ENSP00000388540.2"/>
    <property type="gene ID" value="ENSG00000172575.14"/>
</dbReference>
<dbReference type="Ensembl" id="ENST00000558164.5">
    <molecule id="O95267-5"/>
    <property type="protein sequence ID" value="ENSP00000454164.1"/>
    <property type="gene ID" value="ENSG00000172575.14"/>
</dbReference>
<dbReference type="Ensembl" id="ENST00000559830.5">
    <molecule id="O95267-3"/>
    <property type="protein sequence ID" value="ENSP00000452721.1"/>
    <property type="gene ID" value="ENSG00000172575.14"/>
</dbReference>
<dbReference type="GeneID" id="10125"/>
<dbReference type="KEGG" id="hsa:10125"/>
<dbReference type="MANE-Select" id="ENST00000310803.10">
    <property type="protein sequence ID" value="ENSP00000310244.5"/>
    <property type="RefSeq nucleotide sequence ID" value="NM_005739.4"/>
    <property type="RefSeq protein sequence ID" value="NP_005730.2"/>
</dbReference>
<dbReference type="UCSC" id="uc001zkd.5">
    <molecule id="O95267-1"/>
    <property type="organism name" value="human"/>
</dbReference>
<dbReference type="AGR" id="HGNC:9878"/>
<dbReference type="CTD" id="10125"/>
<dbReference type="DisGeNET" id="10125"/>
<dbReference type="GeneCards" id="RASGRP1"/>
<dbReference type="HGNC" id="HGNC:9878">
    <property type="gene designation" value="RASGRP1"/>
</dbReference>
<dbReference type="HPA" id="ENSG00000172575">
    <property type="expression patterns" value="Tissue enhanced (brain, lymphoid tissue, retina)"/>
</dbReference>
<dbReference type="MalaCards" id="RASGRP1"/>
<dbReference type="MIM" id="152700">
    <property type="type" value="phenotype"/>
</dbReference>
<dbReference type="MIM" id="603962">
    <property type="type" value="gene"/>
</dbReference>
<dbReference type="MIM" id="618534">
    <property type="type" value="phenotype"/>
</dbReference>
<dbReference type="neXtProt" id="NX_O95267"/>
<dbReference type="OpenTargets" id="ENSG00000172575"/>
<dbReference type="Orphanet" id="664699">
    <property type="disease" value="EBV-induced lymphoproliferative disease due to RASGRP1 deficiency"/>
</dbReference>
<dbReference type="PharmGKB" id="PA34240"/>
<dbReference type="VEuPathDB" id="HostDB:ENSG00000172575"/>
<dbReference type="eggNOG" id="KOG3417">
    <property type="taxonomic scope" value="Eukaryota"/>
</dbReference>
<dbReference type="GeneTree" id="ENSGT00940000158910"/>
<dbReference type="HOGENOM" id="CLU_019261_0_0_1"/>
<dbReference type="InParanoid" id="O95267"/>
<dbReference type="OMA" id="CAKWENG"/>
<dbReference type="OrthoDB" id="546434at2759"/>
<dbReference type="PAN-GO" id="O95267">
    <property type="GO annotations" value="4 GO annotations based on evolutionary models"/>
</dbReference>
<dbReference type="PhylomeDB" id="O95267"/>
<dbReference type="TreeFam" id="TF312918"/>
<dbReference type="PathwayCommons" id="O95267"/>
<dbReference type="Reactome" id="R-HSA-114508">
    <property type="pathway name" value="Effects of PIP2 hydrolysis"/>
</dbReference>
<dbReference type="Reactome" id="R-HSA-1169092">
    <property type="pathway name" value="Activation of RAS in B cells"/>
</dbReference>
<dbReference type="Reactome" id="R-HSA-2871837">
    <property type="pathway name" value="FCERI mediated NF-kB activation"/>
</dbReference>
<dbReference type="Reactome" id="R-HSA-354192">
    <property type="pathway name" value="Integrin signaling"/>
</dbReference>
<dbReference type="Reactome" id="R-HSA-392517">
    <property type="pathway name" value="Rap1 signalling"/>
</dbReference>
<dbReference type="Reactome" id="R-HSA-5673001">
    <property type="pathway name" value="RAF/MAP kinase cascade"/>
</dbReference>
<dbReference type="SignaLink" id="O95267"/>
<dbReference type="SIGNOR" id="O95267"/>
<dbReference type="BioGRID-ORCS" id="10125">
    <property type="hits" value="17 hits in 1149 CRISPR screens"/>
</dbReference>
<dbReference type="EvolutionaryTrace" id="O95267"/>
<dbReference type="GeneWiki" id="RASGRP1"/>
<dbReference type="GenomeRNAi" id="10125"/>
<dbReference type="Pharos" id="O95267">
    <property type="development level" value="Tchem"/>
</dbReference>
<dbReference type="PRO" id="PR:O95267"/>
<dbReference type="Proteomes" id="UP000005640">
    <property type="component" value="Chromosome 15"/>
</dbReference>
<dbReference type="RNAct" id="O95267">
    <property type="molecule type" value="protein"/>
</dbReference>
<dbReference type="Bgee" id="ENSG00000172575">
    <property type="expression patterns" value="Expressed in pons and 170 other cell types or tissues"/>
</dbReference>
<dbReference type="ExpressionAtlas" id="O95267">
    <property type="expression patterns" value="baseline and differential"/>
</dbReference>
<dbReference type="GO" id="GO:0005829">
    <property type="term" value="C:cytosol"/>
    <property type="evidence" value="ECO:0000314"/>
    <property type="project" value="HPA"/>
</dbReference>
<dbReference type="GO" id="GO:0005789">
    <property type="term" value="C:endoplasmic reticulum membrane"/>
    <property type="evidence" value="ECO:0007669"/>
    <property type="project" value="UniProtKB-SubCell"/>
</dbReference>
<dbReference type="GO" id="GO:0005794">
    <property type="term" value="C:Golgi apparatus"/>
    <property type="evidence" value="ECO:0000314"/>
    <property type="project" value="CACAO"/>
</dbReference>
<dbReference type="GO" id="GO:0000139">
    <property type="term" value="C:Golgi membrane"/>
    <property type="evidence" value="ECO:0007669"/>
    <property type="project" value="UniProtKB-SubCell"/>
</dbReference>
<dbReference type="GO" id="GO:0016020">
    <property type="term" value="C:membrane"/>
    <property type="evidence" value="ECO:0000304"/>
    <property type="project" value="ProtInc"/>
</dbReference>
<dbReference type="GO" id="GO:0005886">
    <property type="term" value="C:plasma membrane"/>
    <property type="evidence" value="ECO:0000314"/>
    <property type="project" value="HPA"/>
</dbReference>
<dbReference type="GO" id="GO:0005509">
    <property type="term" value="F:calcium ion binding"/>
    <property type="evidence" value="ECO:0000315"/>
    <property type="project" value="UniProtKB"/>
</dbReference>
<dbReference type="GO" id="GO:0019992">
    <property type="term" value="F:diacylglycerol binding"/>
    <property type="evidence" value="ECO:0000315"/>
    <property type="project" value="UniProtKB"/>
</dbReference>
<dbReference type="GO" id="GO:0005085">
    <property type="term" value="F:guanyl-nucleotide exchange factor activity"/>
    <property type="evidence" value="ECO:0000315"/>
    <property type="project" value="UniProtKB"/>
</dbReference>
<dbReference type="GO" id="GO:0042802">
    <property type="term" value="F:identical protein binding"/>
    <property type="evidence" value="ECO:0000353"/>
    <property type="project" value="UniProtKB"/>
</dbReference>
<dbReference type="GO" id="GO:0008289">
    <property type="term" value="F:lipid binding"/>
    <property type="evidence" value="ECO:0000304"/>
    <property type="project" value="ProtInc"/>
</dbReference>
<dbReference type="GO" id="GO:0031210">
    <property type="term" value="F:phosphatidylcholine binding"/>
    <property type="evidence" value="ECO:0000315"/>
    <property type="project" value="UniProtKB"/>
</dbReference>
<dbReference type="GO" id="GO:0008270">
    <property type="term" value="F:zinc ion binding"/>
    <property type="evidence" value="ECO:0000315"/>
    <property type="project" value="UniProtKB"/>
</dbReference>
<dbReference type="GO" id="GO:0090630">
    <property type="term" value="P:activation of GTPase activity"/>
    <property type="evidence" value="ECO:0000314"/>
    <property type="project" value="CACAO"/>
</dbReference>
<dbReference type="GO" id="GO:0042113">
    <property type="term" value="P:B cell activation"/>
    <property type="evidence" value="ECO:0000315"/>
    <property type="project" value="UniProtKB"/>
</dbReference>
<dbReference type="GO" id="GO:0042100">
    <property type="term" value="P:B cell proliferation"/>
    <property type="evidence" value="ECO:0000315"/>
    <property type="project" value="UniProtKB"/>
</dbReference>
<dbReference type="GO" id="GO:0030154">
    <property type="term" value="P:cell differentiation"/>
    <property type="evidence" value="ECO:0007669"/>
    <property type="project" value="UniProtKB-KW"/>
</dbReference>
<dbReference type="GO" id="GO:0002437">
    <property type="term" value="P:inflammatory response to antigenic stimulus"/>
    <property type="evidence" value="ECO:0007669"/>
    <property type="project" value="Ensembl"/>
</dbReference>
<dbReference type="GO" id="GO:0043303">
    <property type="term" value="P:mast cell degranulation"/>
    <property type="evidence" value="ECO:0007669"/>
    <property type="project" value="Ensembl"/>
</dbReference>
<dbReference type="GO" id="GO:0030101">
    <property type="term" value="P:natural killer cell activation"/>
    <property type="evidence" value="ECO:0000315"/>
    <property type="project" value="UniProtKB"/>
</dbReference>
<dbReference type="GO" id="GO:0043406">
    <property type="term" value="P:positive regulation of MAP kinase activity"/>
    <property type="evidence" value="ECO:0000315"/>
    <property type="project" value="CACAO"/>
</dbReference>
<dbReference type="GO" id="GO:0032825">
    <property type="term" value="P:positive regulation of natural killer cell differentiation"/>
    <property type="evidence" value="ECO:0007669"/>
    <property type="project" value="Ensembl"/>
</dbReference>
<dbReference type="GO" id="GO:0045954">
    <property type="term" value="P:positive regulation of natural killer cell mediated cytotoxicity"/>
    <property type="evidence" value="ECO:0000315"/>
    <property type="project" value="UniProtKB"/>
</dbReference>
<dbReference type="GO" id="GO:0001934">
    <property type="term" value="P:positive regulation of protein phosphorylation"/>
    <property type="evidence" value="ECO:0000314"/>
    <property type="project" value="CACAO"/>
</dbReference>
<dbReference type="GO" id="GO:0046579">
    <property type="term" value="P:positive regulation of Ras protein signal transduction"/>
    <property type="evidence" value="ECO:0000315"/>
    <property type="project" value="UniProtKB"/>
</dbReference>
<dbReference type="GO" id="GO:0033089">
    <property type="term" value="P:positive regulation of T cell differentiation in thymus"/>
    <property type="evidence" value="ECO:0007669"/>
    <property type="project" value="Ensembl"/>
</dbReference>
<dbReference type="GO" id="GO:0007265">
    <property type="term" value="P:Ras protein signal transduction"/>
    <property type="evidence" value="ECO:0000318"/>
    <property type="project" value="GO_Central"/>
</dbReference>
<dbReference type="GO" id="GO:0070372">
    <property type="term" value="P:regulation of ERK1 and ERK2 cascade"/>
    <property type="evidence" value="ECO:0000315"/>
    <property type="project" value="UniProtKB"/>
</dbReference>
<dbReference type="GO" id="GO:0051896">
    <property type="term" value="P:regulation of phosphatidylinositol 3-kinase/protein kinase B signal transduction"/>
    <property type="evidence" value="ECO:0007669"/>
    <property type="project" value="Ensembl"/>
</dbReference>
<dbReference type="GO" id="GO:0032252">
    <property type="term" value="P:secretory granule localization"/>
    <property type="evidence" value="ECO:0007669"/>
    <property type="project" value="Ensembl"/>
</dbReference>
<dbReference type="GO" id="GO:0007165">
    <property type="term" value="P:signal transduction"/>
    <property type="evidence" value="ECO:0000304"/>
    <property type="project" value="ProtInc"/>
</dbReference>
<dbReference type="GO" id="GO:0042110">
    <property type="term" value="P:T cell activation"/>
    <property type="evidence" value="ECO:0000315"/>
    <property type="project" value="UniProtKB"/>
</dbReference>
<dbReference type="GO" id="GO:0042098">
    <property type="term" value="P:T cell proliferation"/>
    <property type="evidence" value="ECO:0000315"/>
    <property type="project" value="UniProtKB"/>
</dbReference>
<dbReference type="GO" id="GO:0047496">
    <property type="term" value="P:vesicle transport along microtubule"/>
    <property type="evidence" value="ECO:0007669"/>
    <property type="project" value="Ensembl"/>
</dbReference>
<dbReference type="CDD" id="cd20860">
    <property type="entry name" value="C1_RASGRP1"/>
    <property type="match status" value="1"/>
</dbReference>
<dbReference type="CDD" id="cd22290">
    <property type="entry name" value="cc_RasGRP1_C"/>
    <property type="match status" value="1"/>
</dbReference>
<dbReference type="CDD" id="cd00155">
    <property type="entry name" value="RasGEF"/>
    <property type="match status" value="1"/>
</dbReference>
<dbReference type="CDD" id="cd06224">
    <property type="entry name" value="REM"/>
    <property type="match status" value="1"/>
</dbReference>
<dbReference type="FunFam" id="1.20.870.10:FF:000008">
    <property type="entry name" value="RAS guanyl-releasing protein 1 isoform X1"/>
    <property type="match status" value="1"/>
</dbReference>
<dbReference type="FunFam" id="3.30.60.20:FF:000023">
    <property type="entry name" value="RAS guanyl-releasing protein 1 isoform X1"/>
    <property type="match status" value="1"/>
</dbReference>
<dbReference type="FunFam" id="1.10.238.10:FF:000051">
    <property type="entry name" value="Ras guanyl-releasing protein 3 isoform 1"/>
    <property type="match status" value="1"/>
</dbReference>
<dbReference type="FunFam" id="1.10.840.10:FF:000003">
    <property type="entry name" value="Ras guanyl-releasing protein 3 isoform 1"/>
    <property type="match status" value="1"/>
</dbReference>
<dbReference type="Gene3D" id="3.30.60.20">
    <property type="match status" value="1"/>
</dbReference>
<dbReference type="Gene3D" id="6.10.250.2730">
    <property type="match status" value="1"/>
</dbReference>
<dbReference type="Gene3D" id="1.10.238.10">
    <property type="entry name" value="EF-hand"/>
    <property type="match status" value="1"/>
</dbReference>
<dbReference type="Gene3D" id="1.10.840.10">
    <property type="entry name" value="Ras guanine-nucleotide exchange factors catalytic domain"/>
    <property type="match status" value="1"/>
</dbReference>
<dbReference type="Gene3D" id="1.20.870.10">
    <property type="entry name" value="Son of sevenless (SoS) protein Chain: S domain 1"/>
    <property type="match status" value="1"/>
</dbReference>
<dbReference type="InterPro" id="IPR046349">
    <property type="entry name" value="C1-like_sf"/>
</dbReference>
<dbReference type="InterPro" id="IPR020454">
    <property type="entry name" value="DAG/PE-bd"/>
</dbReference>
<dbReference type="InterPro" id="IPR011992">
    <property type="entry name" value="EF-hand-dom_pair"/>
</dbReference>
<dbReference type="InterPro" id="IPR018247">
    <property type="entry name" value="EF_Hand_1_Ca_BS"/>
</dbReference>
<dbReference type="InterPro" id="IPR002048">
    <property type="entry name" value="EF_hand_dom"/>
</dbReference>
<dbReference type="InterPro" id="IPR002219">
    <property type="entry name" value="PE/DAG-bd"/>
</dbReference>
<dbReference type="InterPro" id="IPR008937">
    <property type="entry name" value="Ras-like_GEF"/>
</dbReference>
<dbReference type="InterPro" id="IPR000651">
    <property type="entry name" value="Ras-like_Gua-exchang_fac_N"/>
</dbReference>
<dbReference type="InterPro" id="IPR023578">
    <property type="entry name" value="Ras_GEF_dom_sf"/>
</dbReference>
<dbReference type="InterPro" id="IPR001895">
    <property type="entry name" value="RASGEF_cat_dom"/>
</dbReference>
<dbReference type="InterPro" id="IPR036964">
    <property type="entry name" value="RASGEF_cat_dom_sf"/>
</dbReference>
<dbReference type="PANTHER" id="PTHR23113">
    <property type="entry name" value="GUANINE NUCLEOTIDE EXCHANGE FACTOR"/>
    <property type="match status" value="1"/>
</dbReference>
<dbReference type="PANTHER" id="PTHR23113:SF174">
    <property type="entry name" value="RAS GUANYL-RELEASING PROTEIN 1"/>
    <property type="match status" value="1"/>
</dbReference>
<dbReference type="Pfam" id="PF00130">
    <property type="entry name" value="C1_1"/>
    <property type="match status" value="1"/>
</dbReference>
<dbReference type="Pfam" id="PF00617">
    <property type="entry name" value="RasGEF"/>
    <property type="match status" value="1"/>
</dbReference>
<dbReference type="Pfam" id="PF00618">
    <property type="entry name" value="RasGEF_N"/>
    <property type="match status" value="1"/>
</dbReference>
<dbReference type="PRINTS" id="PR00008">
    <property type="entry name" value="DAGPEDOMAIN"/>
</dbReference>
<dbReference type="SMART" id="SM00109">
    <property type="entry name" value="C1"/>
    <property type="match status" value="1"/>
</dbReference>
<dbReference type="SMART" id="SM00054">
    <property type="entry name" value="EFh"/>
    <property type="match status" value="1"/>
</dbReference>
<dbReference type="SMART" id="SM00147">
    <property type="entry name" value="RasGEF"/>
    <property type="match status" value="1"/>
</dbReference>
<dbReference type="SMART" id="SM00229">
    <property type="entry name" value="RasGEFN"/>
    <property type="match status" value="1"/>
</dbReference>
<dbReference type="SUPFAM" id="SSF57889">
    <property type="entry name" value="Cysteine-rich domain"/>
    <property type="match status" value="1"/>
</dbReference>
<dbReference type="SUPFAM" id="SSF47473">
    <property type="entry name" value="EF-hand"/>
    <property type="match status" value="1"/>
</dbReference>
<dbReference type="SUPFAM" id="SSF48366">
    <property type="entry name" value="Ras GEF"/>
    <property type="match status" value="1"/>
</dbReference>
<dbReference type="PROSITE" id="PS00018">
    <property type="entry name" value="EF_HAND_1"/>
    <property type="match status" value="2"/>
</dbReference>
<dbReference type="PROSITE" id="PS50222">
    <property type="entry name" value="EF_HAND_2"/>
    <property type="match status" value="3"/>
</dbReference>
<dbReference type="PROSITE" id="PS50009">
    <property type="entry name" value="RASGEF_CAT"/>
    <property type="match status" value="1"/>
</dbReference>
<dbReference type="PROSITE" id="PS50212">
    <property type="entry name" value="RASGEF_NTER"/>
    <property type="match status" value="1"/>
</dbReference>
<dbReference type="PROSITE" id="PS00479">
    <property type="entry name" value="ZF_DAG_PE_1"/>
    <property type="match status" value="1"/>
</dbReference>
<dbReference type="PROSITE" id="PS50081">
    <property type="entry name" value="ZF_DAG_PE_2"/>
    <property type="match status" value="1"/>
</dbReference>